<protein>
    <recommendedName>
        <fullName evidence="1">ATP synthase subunit alpha</fullName>
        <ecNumber evidence="1">7.1.2.2</ecNumber>
    </recommendedName>
    <alternativeName>
        <fullName evidence="1">ATP synthase F1 sector subunit alpha</fullName>
    </alternativeName>
    <alternativeName>
        <fullName evidence="1">F-ATPase subunit alpha</fullName>
    </alternativeName>
</protein>
<name>ATPA_STRPQ</name>
<dbReference type="EC" id="7.1.2.2" evidence="1"/>
<dbReference type="EMBL" id="BA000034">
    <property type="protein sequence ID" value="BAC64452.1"/>
    <property type="molecule type" value="Genomic_DNA"/>
</dbReference>
<dbReference type="RefSeq" id="WP_002985238.1">
    <property type="nucleotide sequence ID" value="NC_004606.1"/>
</dbReference>
<dbReference type="SMR" id="P0DA03"/>
<dbReference type="KEGG" id="sps:SPs1357"/>
<dbReference type="HOGENOM" id="CLU_010091_2_1_9"/>
<dbReference type="GO" id="GO:0005886">
    <property type="term" value="C:plasma membrane"/>
    <property type="evidence" value="ECO:0007669"/>
    <property type="project" value="UniProtKB-SubCell"/>
</dbReference>
<dbReference type="GO" id="GO:0045259">
    <property type="term" value="C:proton-transporting ATP synthase complex"/>
    <property type="evidence" value="ECO:0007669"/>
    <property type="project" value="UniProtKB-KW"/>
</dbReference>
<dbReference type="GO" id="GO:0043531">
    <property type="term" value="F:ADP binding"/>
    <property type="evidence" value="ECO:0007669"/>
    <property type="project" value="TreeGrafter"/>
</dbReference>
<dbReference type="GO" id="GO:0005524">
    <property type="term" value="F:ATP binding"/>
    <property type="evidence" value="ECO:0007669"/>
    <property type="project" value="UniProtKB-UniRule"/>
</dbReference>
<dbReference type="GO" id="GO:0046933">
    <property type="term" value="F:proton-transporting ATP synthase activity, rotational mechanism"/>
    <property type="evidence" value="ECO:0007669"/>
    <property type="project" value="UniProtKB-UniRule"/>
</dbReference>
<dbReference type="CDD" id="cd18113">
    <property type="entry name" value="ATP-synt_F1_alpha_C"/>
    <property type="match status" value="1"/>
</dbReference>
<dbReference type="CDD" id="cd18116">
    <property type="entry name" value="ATP-synt_F1_alpha_N"/>
    <property type="match status" value="1"/>
</dbReference>
<dbReference type="CDD" id="cd01132">
    <property type="entry name" value="F1-ATPase_alpha_CD"/>
    <property type="match status" value="1"/>
</dbReference>
<dbReference type="FunFam" id="1.20.150.20:FF:000001">
    <property type="entry name" value="ATP synthase subunit alpha"/>
    <property type="match status" value="1"/>
</dbReference>
<dbReference type="FunFam" id="2.40.30.20:FF:000001">
    <property type="entry name" value="ATP synthase subunit alpha"/>
    <property type="match status" value="1"/>
</dbReference>
<dbReference type="FunFam" id="3.40.50.300:FF:000002">
    <property type="entry name" value="ATP synthase subunit alpha"/>
    <property type="match status" value="1"/>
</dbReference>
<dbReference type="Gene3D" id="2.40.30.20">
    <property type="match status" value="1"/>
</dbReference>
<dbReference type="Gene3D" id="1.20.150.20">
    <property type="entry name" value="ATP synthase alpha/beta chain, C-terminal domain"/>
    <property type="match status" value="1"/>
</dbReference>
<dbReference type="Gene3D" id="3.40.50.300">
    <property type="entry name" value="P-loop containing nucleotide triphosphate hydrolases"/>
    <property type="match status" value="1"/>
</dbReference>
<dbReference type="HAMAP" id="MF_01346">
    <property type="entry name" value="ATP_synth_alpha_bact"/>
    <property type="match status" value="1"/>
</dbReference>
<dbReference type="InterPro" id="IPR023366">
    <property type="entry name" value="ATP_synth_asu-like_sf"/>
</dbReference>
<dbReference type="InterPro" id="IPR000793">
    <property type="entry name" value="ATP_synth_asu_C"/>
</dbReference>
<dbReference type="InterPro" id="IPR038376">
    <property type="entry name" value="ATP_synth_asu_C_sf"/>
</dbReference>
<dbReference type="InterPro" id="IPR033732">
    <property type="entry name" value="ATP_synth_F1_a_nt-bd_dom"/>
</dbReference>
<dbReference type="InterPro" id="IPR005294">
    <property type="entry name" value="ATP_synth_F1_asu"/>
</dbReference>
<dbReference type="InterPro" id="IPR004100">
    <property type="entry name" value="ATPase_F1/V1/A1_a/bsu_N"/>
</dbReference>
<dbReference type="InterPro" id="IPR036121">
    <property type="entry name" value="ATPase_F1/V1/A1_a/bsu_N_sf"/>
</dbReference>
<dbReference type="InterPro" id="IPR000194">
    <property type="entry name" value="ATPase_F1/V1/A1_a/bsu_nucl-bd"/>
</dbReference>
<dbReference type="InterPro" id="IPR027417">
    <property type="entry name" value="P-loop_NTPase"/>
</dbReference>
<dbReference type="NCBIfam" id="TIGR00962">
    <property type="entry name" value="atpA"/>
    <property type="match status" value="1"/>
</dbReference>
<dbReference type="NCBIfam" id="NF009884">
    <property type="entry name" value="PRK13343.1"/>
    <property type="match status" value="1"/>
</dbReference>
<dbReference type="PANTHER" id="PTHR48082">
    <property type="entry name" value="ATP SYNTHASE SUBUNIT ALPHA, MITOCHONDRIAL"/>
    <property type="match status" value="1"/>
</dbReference>
<dbReference type="PANTHER" id="PTHR48082:SF2">
    <property type="entry name" value="ATP SYNTHASE SUBUNIT ALPHA, MITOCHONDRIAL"/>
    <property type="match status" value="1"/>
</dbReference>
<dbReference type="Pfam" id="PF00006">
    <property type="entry name" value="ATP-synt_ab"/>
    <property type="match status" value="1"/>
</dbReference>
<dbReference type="Pfam" id="PF00306">
    <property type="entry name" value="ATP-synt_ab_C"/>
    <property type="match status" value="1"/>
</dbReference>
<dbReference type="Pfam" id="PF02874">
    <property type="entry name" value="ATP-synt_ab_N"/>
    <property type="match status" value="1"/>
</dbReference>
<dbReference type="PIRSF" id="PIRSF039088">
    <property type="entry name" value="F_ATPase_subunit_alpha"/>
    <property type="match status" value="1"/>
</dbReference>
<dbReference type="SUPFAM" id="SSF47917">
    <property type="entry name" value="C-terminal domain of alpha and beta subunits of F1 ATP synthase"/>
    <property type="match status" value="1"/>
</dbReference>
<dbReference type="SUPFAM" id="SSF50615">
    <property type="entry name" value="N-terminal domain of alpha and beta subunits of F1 ATP synthase"/>
    <property type="match status" value="1"/>
</dbReference>
<dbReference type="SUPFAM" id="SSF52540">
    <property type="entry name" value="P-loop containing nucleoside triphosphate hydrolases"/>
    <property type="match status" value="1"/>
</dbReference>
<accession>P0DA03</accession>
<accession>Q79WQ3</accession>
<accession>Q7CFA2</accession>
<reference key="1">
    <citation type="journal article" date="2003" name="Genome Res.">
        <title>Genome sequence of an M3 strain of Streptococcus pyogenes reveals a large-scale genomic rearrangement in invasive strains and new insights into phage evolution.</title>
        <authorList>
            <person name="Nakagawa I."/>
            <person name="Kurokawa K."/>
            <person name="Yamashita A."/>
            <person name="Nakata M."/>
            <person name="Tomiyasu Y."/>
            <person name="Okahashi N."/>
            <person name="Kawabata S."/>
            <person name="Yamazaki K."/>
            <person name="Shiba T."/>
            <person name="Yasunaga T."/>
            <person name="Hayashi H."/>
            <person name="Hattori M."/>
            <person name="Hamada S."/>
        </authorList>
    </citation>
    <scope>NUCLEOTIDE SEQUENCE [LARGE SCALE GENOMIC DNA]</scope>
    <source>
        <strain>SSI-1</strain>
    </source>
</reference>
<gene>
    <name evidence="1" type="primary">atpA</name>
    <name type="ordered locus">SPs1357</name>
</gene>
<evidence type="ECO:0000255" key="1">
    <source>
        <dbReference type="HAMAP-Rule" id="MF_01346"/>
    </source>
</evidence>
<organism>
    <name type="scientific">Streptococcus pyogenes serotype M3 (strain SSI-1)</name>
    <dbReference type="NCBI Taxonomy" id="193567"/>
    <lineage>
        <taxon>Bacteria</taxon>
        <taxon>Bacillati</taxon>
        <taxon>Bacillota</taxon>
        <taxon>Bacilli</taxon>
        <taxon>Lactobacillales</taxon>
        <taxon>Streptococcaceae</taxon>
        <taxon>Streptococcus</taxon>
    </lineage>
</organism>
<proteinExistence type="inferred from homology"/>
<sequence>MAINAQEISALIKKQIENFQPNFDVTETGIVTYIGDGIARARGLDNAMSGELLEFENGAYGMAQNLESNDVGIIILGDFSAIREGDVVKRTGKIMEVPVGEALIGRVVNPLGQPVDGLGDIETTGFRPVETPAPGVMQRKSVSEPLQTGLKAIDALVPIGRGQRELIIGDRQTGKTSVAIDAILNQKGQDMICIYVAIGQKESTVRTQVETLRRYGALDYTIVVTASASQPSPLLFIAPYAGVAMAEEFMYQGKHVLIVYDDLSKQAVAYRELSLLLRRPPGREAYPGDVFYLHSRLLERSAKVSDDLGGGSITALPFIETQAGDISAYIATNVISITDGQIFLQENLFNSGIRPAIDAGSSVSRVGGSAQIKAMKKVAGTLRLDLASYRELEAFTQFGSDLDAATQAKLNRGRRTVEILKQPLHKPLPVEKQVVILYALTHGFLDDVPVDDILAFEEALYDYFDVHYNDLFETIRTTKDLPEEAALDAAIKAFKEHSNFKS</sequence>
<keyword id="KW-0066">ATP synthesis</keyword>
<keyword id="KW-0067">ATP-binding</keyword>
<keyword id="KW-1003">Cell membrane</keyword>
<keyword id="KW-0139">CF(1)</keyword>
<keyword id="KW-0375">Hydrogen ion transport</keyword>
<keyword id="KW-0406">Ion transport</keyword>
<keyword id="KW-0472">Membrane</keyword>
<keyword id="KW-0547">Nucleotide-binding</keyword>
<keyword id="KW-1278">Translocase</keyword>
<keyword id="KW-0813">Transport</keyword>
<comment type="function">
    <text evidence="1">Produces ATP from ADP in the presence of a proton gradient across the membrane. The alpha chain is a regulatory subunit.</text>
</comment>
<comment type="catalytic activity">
    <reaction evidence="1">
        <text>ATP + H2O + 4 H(+)(in) = ADP + phosphate + 5 H(+)(out)</text>
        <dbReference type="Rhea" id="RHEA:57720"/>
        <dbReference type="ChEBI" id="CHEBI:15377"/>
        <dbReference type="ChEBI" id="CHEBI:15378"/>
        <dbReference type="ChEBI" id="CHEBI:30616"/>
        <dbReference type="ChEBI" id="CHEBI:43474"/>
        <dbReference type="ChEBI" id="CHEBI:456216"/>
        <dbReference type="EC" id="7.1.2.2"/>
    </reaction>
</comment>
<comment type="subunit">
    <text evidence="1">F-type ATPases have 2 components, CF(1) - the catalytic core - and CF(0) - the membrane proton channel. CF(1) has five subunits: alpha(3), beta(3), gamma(1), delta(1), epsilon(1). CF(0) has three main subunits: a(1), b(2) and c(9-12). The alpha and beta chains form an alternating ring which encloses part of the gamma chain. CF(1) is attached to CF(0) by a central stalk formed by the gamma and epsilon chains, while a peripheral stalk is formed by the delta and b chains.</text>
</comment>
<comment type="subcellular location">
    <subcellularLocation>
        <location evidence="1">Cell membrane</location>
        <topology evidence="1">Peripheral membrane protein</topology>
    </subcellularLocation>
</comment>
<comment type="similarity">
    <text evidence="1">Belongs to the ATPase alpha/beta chains family.</text>
</comment>
<feature type="chain" id="PRO_0000411283" description="ATP synthase subunit alpha">
    <location>
        <begin position="1"/>
        <end position="502"/>
    </location>
</feature>
<feature type="binding site" evidence="1">
    <location>
        <begin position="169"/>
        <end position="176"/>
    </location>
    <ligand>
        <name>ATP</name>
        <dbReference type="ChEBI" id="CHEBI:30616"/>
    </ligand>
</feature>
<feature type="site" description="Required for activity" evidence="1">
    <location>
        <position position="362"/>
    </location>
</feature>